<feature type="chain" id="PRO_1000019988" description="Probable cytosol aminopeptidase">
    <location>
        <begin position="1"/>
        <end position="510"/>
    </location>
</feature>
<feature type="active site" evidence="1">
    <location>
        <position position="284"/>
    </location>
</feature>
<feature type="active site" evidence="1">
    <location>
        <position position="359"/>
    </location>
</feature>
<feature type="binding site" evidence="1">
    <location>
        <position position="272"/>
    </location>
    <ligand>
        <name>Mn(2+)</name>
        <dbReference type="ChEBI" id="CHEBI:29035"/>
        <label>2</label>
    </ligand>
</feature>
<feature type="binding site" evidence="1">
    <location>
        <position position="277"/>
    </location>
    <ligand>
        <name>Mn(2+)</name>
        <dbReference type="ChEBI" id="CHEBI:29035"/>
        <label>1</label>
    </ligand>
</feature>
<feature type="binding site" evidence="1">
    <location>
        <position position="277"/>
    </location>
    <ligand>
        <name>Mn(2+)</name>
        <dbReference type="ChEBI" id="CHEBI:29035"/>
        <label>2</label>
    </ligand>
</feature>
<feature type="binding site" evidence="1">
    <location>
        <position position="296"/>
    </location>
    <ligand>
        <name>Mn(2+)</name>
        <dbReference type="ChEBI" id="CHEBI:29035"/>
        <label>2</label>
    </ligand>
</feature>
<feature type="binding site" evidence="1">
    <location>
        <position position="355"/>
    </location>
    <ligand>
        <name>Mn(2+)</name>
        <dbReference type="ChEBI" id="CHEBI:29035"/>
        <label>1</label>
    </ligand>
</feature>
<feature type="binding site" evidence="1">
    <location>
        <position position="357"/>
    </location>
    <ligand>
        <name>Mn(2+)</name>
        <dbReference type="ChEBI" id="CHEBI:29035"/>
        <label>1</label>
    </ligand>
</feature>
<feature type="binding site" evidence="1">
    <location>
        <position position="357"/>
    </location>
    <ligand>
        <name>Mn(2+)</name>
        <dbReference type="ChEBI" id="CHEBI:29035"/>
        <label>2</label>
    </ligand>
</feature>
<accession>Q2JRU4</accession>
<sequence length="510" mass="53870">MQLRLGEPPLTQAECALVYCFAPSGENATFSLPAEIASLDEKVWSGLVAEAAQEQKFQGKPNSSLALRLPGPIRKLVLVGLGDPAALTLEALRRATANGLRQAHSLKAKQVVLSLPDTGLDQVRAVQAVAEASLLVAHQDNRFKSPPKPEEERGFSVEEVTLLVPGLAQARQDYENALQRATEMAAGTILARELVAAPANVVTPPALAETARQLAQDYGLEVEILGREECQALGMGAFLGVAQASDLPPQFIHLTYKPKEGDPVAKLALVGKGLTFDSGGLNIKTDSRSIAMMKTDMGGAAAVLGAARALAALKPQVEVHFIVAATENMISGRALHPGDILTASNGKTIEVNNTDAEGRLTLADALVFAEKLGVDAIVDLATLTGACVIALGEEIAGLFTPDEKLAQELQQAANLSGEKIWRLPLEESYFEGLSSTVADMKNTGPRSGGSITAALFLKQFVEKTPWAHLDIAGPVWAEKDSGYTNKGATGYGVRTLVEWVLAREMAAASS</sequence>
<protein>
    <recommendedName>
        <fullName evidence="1">Probable cytosol aminopeptidase</fullName>
        <ecNumber evidence="1">3.4.11.1</ecNumber>
    </recommendedName>
    <alternativeName>
        <fullName evidence="1">Leucine aminopeptidase</fullName>
        <shortName evidence="1">LAP</shortName>
        <ecNumber evidence="1">3.4.11.10</ecNumber>
    </alternativeName>
    <alternativeName>
        <fullName evidence="1">Leucyl aminopeptidase</fullName>
    </alternativeName>
</protein>
<name>AMPA_SYNJA</name>
<reference key="1">
    <citation type="journal article" date="2007" name="ISME J.">
        <title>Population level functional diversity in a microbial community revealed by comparative genomic and metagenomic analyses.</title>
        <authorList>
            <person name="Bhaya D."/>
            <person name="Grossman A.R."/>
            <person name="Steunou A.-S."/>
            <person name="Khuri N."/>
            <person name="Cohan F.M."/>
            <person name="Hamamura N."/>
            <person name="Melendrez M.C."/>
            <person name="Bateson M.M."/>
            <person name="Ward D.M."/>
            <person name="Heidelberg J.F."/>
        </authorList>
    </citation>
    <scope>NUCLEOTIDE SEQUENCE [LARGE SCALE GENOMIC DNA]</scope>
    <source>
        <strain>JA-3-3Ab</strain>
    </source>
</reference>
<keyword id="KW-0031">Aminopeptidase</keyword>
<keyword id="KW-0963">Cytoplasm</keyword>
<keyword id="KW-0378">Hydrolase</keyword>
<keyword id="KW-0464">Manganese</keyword>
<keyword id="KW-0479">Metal-binding</keyword>
<keyword id="KW-0645">Protease</keyword>
<evidence type="ECO:0000255" key="1">
    <source>
        <dbReference type="HAMAP-Rule" id="MF_00181"/>
    </source>
</evidence>
<proteinExistence type="inferred from homology"/>
<organism>
    <name type="scientific">Synechococcus sp. (strain JA-3-3Ab)</name>
    <name type="common">Cyanobacteria bacterium Yellowstone A-Prime</name>
    <dbReference type="NCBI Taxonomy" id="321327"/>
    <lineage>
        <taxon>Bacteria</taxon>
        <taxon>Bacillati</taxon>
        <taxon>Cyanobacteriota</taxon>
        <taxon>Cyanophyceae</taxon>
        <taxon>Synechococcales</taxon>
        <taxon>Synechococcaceae</taxon>
        <taxon>Synechococcus</taxon>
    </lineage>
</organism>
<dbReference type="EC" id="3.4.11.1" evidence="1"/>
<dbReference type="EC" id="3.4.11.10" evidence="1"/>
<dbReference type="EMBL" id="CP000239">
    <property type="protein sequence ID" value="ABD00647.1"/>
    <property type="molecule type" value="Genomic_DNA"/>
</dbReference>
<dbReference type="RefSeq" id="WP_011431320.1">
    <property type="nucleotide sequence ID" value="NC_007775.1"/>
</dbReference>
<dbReference type="SMR" id="Q2JRU4"/>
<dbReference type="STRING" id="321327.CYA_2527"/>
<dbReference type="MEROPS" id="M17.A03"/>
<dbReference type="KEGG" id="cya:CYA_2527"/>
<dbReference type="eggNOG" id="COG0260">
    <property type="taxonomic scope" value="Bacteria"/>
</dbReference>
<dbReference type="HOGENOM" id="CLU_013734_5_1_3"/>
<dbReference type="OrthoDB" id="9809354at2"/>
<dbReference type="Proteomes" id="UP000008818">
    <property type="component" value="Chromosome"/>
</dbReference>
<dbReference type="GO" id="GO:0005737">
    <property type="term" value="C:cytoplasm"/>
    <property type="evidence" value="ECO:0007669"/>
    <property type="project" value="UniProtKB-SubCell"/>
</dbReference>
<dbReference type="GO" id="GO:0030145">
    <property type="term" value="F:manganese ion binding"/>
    <property type="evidence" value="ECO:0007669"/>
    <property type="project" value="UniProtKB-UniRule"/>
</dbReference>
<dbReference type="GO" id="GO:0070006">
    <property type="term" value="F:metalloaminopeptidase activity"/>
    <property type="evidence" value="ECO:0007669"/>
    <property type="project" value="InterPro"/>
</dbReference>
<dbReference type="GO" id="GO:0006508">
    <property type="term" value="P:proteolysis"/>
    <property type="evidence" value="ECO:0007669"/>
    <property type="project" value="UniProtKB-KW"/>
</dbReference>
<dbReference type="CDD" id="cd00433">
    <property type="entry name" value="Peptidase_M17"/>
    <property type="match status" value="1"/>
</dbReference>
<dbReference type="Gene3D" id="3.40.220.10">
    <property type="entry name" value="Leucine Aminopeptidase, subunit E, domain 1"/>
    <property type="match status" value="1"/>
</dbReference>
<dbReference type="Gene3D" id="3.40.630.10">
    <property type="entry name" value="Zn peptidases"/>
    <property type="match status" value="1"/>
</dbReference>
<dbReference type="HAMAP" id="MF_00181">
    <property type="entry name" value="Cytosol_peptidase_M17"/>
    <property type="match status" value="1"/>
</dbReference>
<dbReference type="InterPro" id="IPR011356">
    <property type="entry name" value="Leucine_aapep/pepB"/>
</dbReference>
<dbReference type="InterPro" id="IPR043472">
    <property type="entry name" value="Macro_dom-like"/>
</dbReference>
<dbReference type="InterPro" id="IPR000819">
    <property type="entry name" value="Peptidase_M17_C"/>
</dbReference>
<dbReference type="InterPro" id="IPR023042">
    <property type="entry name" value="Peptidase_M17_leu_NH2_pept"/>
</dbReference>
<dbReference type="InterPro" id="IPR008283">
    <property type="entry name" value="Peptidase_M17_N"/>
</dbReference>
<dbReference type="NCBIfam" id="NF002073">
    <property type="entry name" value="PRK00913.1-2"/>
    <property type="match status" value="1"/>
</dbReference>
<dbReference type="NCBIfam" id="NF002074">
    <property type="entry name" value="PRK00913.1-4"/>
    <property type="match status" value="1"/>
</dbReference>
<dbReference type="NCBIfam" id="NF002076">
    <property type="entry name" value="PRK00913.2-3"/>
    <property type="match status" value="1"/>
</dbReference>
<dbReference type="NCBIfam" id="NF002083">
    <property type="entry name" value="PRK00913.3-5"/>
    <property type="match status" value="1"/>
</dbReference>
<dbReference type="PANTHER" id="PTHR11963:SF23">
    <property type="entry name" value="CYTOSOL AMINOPEPTIDASE"/>
    <property type="match status" value="1"/>
</dbReference>
<dbReference type="PANTHER" id="PTHR11963">
    <property type="entry name" value="LEUCINE AMINOPEPTIDASE-RELATED"/>
    <property type="match status" value="1"/>
</dbReference>
<dbReference type="Pfam" id="PF00883">
    <property type="entry name" value="Peptidase_M17"/>
    <property type="match status" value="1"/>
</dbReference>
<dbReference type="Pfam" id="PF02789">
    <property type="entry name" value="Peptidase_M17_N"/>
    <property type="match status" value="1"/>
</dbReference>
<dbReference type="PRINTS" id="PR00481">
    <property type="entry name" value="LAMNOPPTDASE"/>
</dbReference>
<dbReference type="SUPFAM" id="SSF52949">
    <property type="entry name" value="Macro domain-like"/>
    <property type="match status" value="1"/>
</dbReference>
<dbReference type="SUPFAM" id="SSF53187">
    <property type="entry name" value="Zn-dependent exopeptidases"/>
    <property type="match status" value="1"/>
</dbReference>
<dbReference type="PROSITE" id="PS00631">
    <property type="entry name" value="CYTOSOL_AP"/>
    <property type="match status" value="1"/>
</dbReference>
<comment type="function">
    <text evidence="1">Presumably involved in the processing and regular turnover of intracellular proteins. Catalyzes the removal of unsubstituted N-terminal amino acids from various peptides.</text>
</comment>
<comment type="catalytic activity">
    <reaction evidence="1">
        <text>Release of an N-terminal amino acid, Xaa-|-Yaa-, in which Xaa is preferably Leu, but may be other amino acids including Pro although not Arg or Lys, and Yaa may be Pro. Amino acid amides and methyl esters are also readily hydrolyzed, but rates on arylamides are exceedingly low.</text>
        <dbReference type="EC" id="3.4.11.1"/>
    </reaction>
</comment>
<comment type="catalytic activity">
    <reaction evidence="1">
        <text>Release of an N-terminal amino acid, preferentially leucine, but not glutamic or aspartic acids.</text>
        <dbReference type="EC" id="3.4.11.10"/>
    </reaction>
</comment>
<comment type="cofactor">
    <cofactor evidence="1">
        <name>Mn(2+)</name>
        <dbReference type="ChEBI" id="CHEBI:29035"/>
    </cofactor>
    <text evidence="1">Binds 2 manganese ions per subunit.</text>
</comment>
<comment type="subcellular location">
    <subcellularLocation>
        <location evidence="1">Cytoplasm</location>
    </subcellularLocation>
</comment>
<comment type="similarity">
    <text evidence="1">Belongs to the peptidase M17 family.</text>
</comment>
<gene>
    <name evidence="1" type="primary">pepA</name>
    <name type="ordered locus">CYA_2527</name>
</gene>